<accession>Q5W1L3</accession>
<accession>B4MBD5</accession>
<sequence>MLRLLLLPLFLFTLSMACMGQTFQYSRGWTNGKRAPPAALVTNGHNLGLLDIYDIQDRPTDIKLERCLLQLQHFVGNALLHRSFANGLAYSASRPDPETDVRSINIHSRPGSGNNNIENSLYPNVNHRQSNELFEALNAPGPDAVEPNDYGKH</sequence>
<keyword id="KW-0027">Amidation</keyword>
<keyword id="KW-0165">Cleavage on pair of basic residues</keyword>
<keyword id="KW-0527">Neuropeptide</keyword>
<keyword id="KW-0873">Pyrrolidone carboxylic acid</keyword>
<keyword id="KW-1185">Reference proteome</keyword>
<keyword id="KW-0964">Secreted</keyword>
<keyword id="KW-0732">Signal</keyword>
<protein>
    <recommendedName>
        <fullName>Pro-corazonin</fullName>
        <shortName>Crz</shortName>
        <shortName>Dv-Crz</shortName>
    </recommendedName>
    <component>
        <recommendedName>
            <fullName>Corazonin</fullName>
        </recommendedName>
    </component>
    <component>
        <recommendedName>
            <fullName>Corazonin precursor-related peptide</fullName>
            <shortName>CPRP</shortName>
        </recommendedName>
    </component>
</protein>
<dbReference type="EMBL" id="AJ851893">
    <property type="protein sequence ID" value="CAH65473.1"/>
    <property type="molecule type" value="Genomic_DNA"/>
</dbReference>
<dbReference type="EMBL" id="CH940656">
    <property type="protein sequence ID" value="EDW58406.1"/>
    <property type="molecule type" value="Genomic_DNA"/>
</dbReference>
<dbReference type="RefSeq" id="XP_002058438.1">
    <property type="nucleotide sequence ID" value="XM_002058402.4"/>
</dbReference>
<dbReference type="FunCoup" id="Q5W1L3">
    <property type="interactions" value="76"/>
</dbReference>
<dbReference type="STRING" id="7244.Q5W1L3"/>
<dbReference type="EnsemblMetazoa" id="FBtr0230340">
    <property type="protein sequence ID" value="FBpp0228832"/>
    <property type="gene ID" value="FBgn0064313"/>
</dbReference>
<dbReference type="EnsemblMetazoa" id="XM_002058402.3">
    <property type="protein sequence ID" value="XP_002058438.1"/>
    <property type="gene ID" value="LOC6634927"/>
</dbReference>
<dbReference type="GeneID" id="6634927"/>
<dbReference type="KEGG" id="dvi:6634927"/>
<dbReference type="CTD" id="12973"/>
<dbReference type="eggNOG" id="ENOG502T821">
    <property type="taxonomic scope" value="Eukaryota"/>
</dbReference>
<dbReference type="HOGENOM" id="CLU_1679760_0_0_1"/>
<dbReference type="InParanoid" id="Q5W1L3"/>
<dbReference type="OMA" id="RHRQSNE"/>
<dbReference type="OrthoDB" id="6436322at2759"/>
<dbReference type="PhylomeDB" id="Q5W1L3"/>
<dbReference type="Proteomes" id="UP000008792">
    <property type="component" value="Unassembled WGS sequence"/>
</dbReference>
<dbReference type="GO" id="GO:0005576">
    <property type="term" value="C:extracellular region"/>
    <property type="evidence" value="ECO:0000250"/>
    <property type="project" value="UniProtKB"/>
</dbReference>
<dbReference type="GO" id="GO:0005615">
    <property type="term" value="C:extracellular space"/>
    <property type="evidence" value="ECO:0007669"/>
    <property type="project" value="EnsemblMetazoa"/>
</dbReference>
<dbReference type="GO" id="GO:0071858">
    <property type="term" value="F:corazonin receptor binding"/>
    <property type="evidence" value="ECO:0007669"/>
    <property type="project" value="EnsemblMetazoa"/>
</dbReference>
<dbReference type="GO" id="GO:0005184">
    <property type="term" value="F:neuropeptide hormone activity"/>
    <property type="evidence" value="ECO:0000250"/>
    <property type="project" value="UniProtKB"/>
</dbReference>
<dbReference type="GO" id="GO:0006117">
    <property type="term" value="P:acetaldehyde metabolic process"/>
    <property type="evidence" value="ECO:0007669"/>
    <property type="project" value="EnsemblMetazoa"/>
</dbReference>
<dbReference type="GO" id="GO:0048149">
    <property type="term" value="P:behavioral response to ethanol"/>
    <property type="evidence" value="ECO:0007669"/>
    <property type="project" value="EnsemblMetazoa"/>
</dbReference>
<dbReference type="GO" id="GO:0071361">
    <property type="term" value="P:cellular response to ethanol"/>
    <property type="evidence" value="ECO:0007669"/>
    <property type="project" value="EnsemblMetazoa"/>
</dbReference>
<dbReference type="GO" id="GO:0007619">
    <property type="term" value="P:courtship behavior"/>
    <property type="evidence" value="ECO:0007669"/>
    <property type="project" value="EnsemblMetazoa"/>
</dbReference>
<dbReference type="GO" id="GO:0007218">
    <property type="term" value="P:neuropeptide signaling pathway"/>
    <property type="evidence" value="ECO:0007669"/>
    <property type="project" value="UniProtKB-KW"/>
</dbReference>
<dbReference type="GO" id="GO:0045823">
    <property type="term" value="P:positive regulation of heart contraction"/>
    <property type="evidence" value="ECO:0000250"/>
    <property type="project" value="UniProtKB"/>
</dbReference>
<dbReference type="InterPro" id="IPR020190">
    <property type="entry name" value="Procorazonin"/>
</dbReference>
<dbReference type="Pfam" id="PF17308">
    <property type="entry name" value="Corazonin"/>
    <property type="match status" value="1"/>
</dbReference>
<reference evidence="4 5" key="1">
    <citation type="journal article" date="2005" name="J. Comp. Neurol.">
        <title>Comparative analysis of Corazonin-encoding genes (Crz's) in Drosophila species and functional insights into Crz-expressing neurons.</title>
        <authorList>
            <person name="Choi Y.J."/>
            <person name="Lee G."/>
            <person name="Hall J.C."/>
            <person name="Park J.H."/>
        </authorList>
    </citation>
    <scope>NUCLEOTIDE SEQUENCE [GENOMIC DNA]</scope>
    <scope>TISSUE SPECIFICITY</scope>
    <source>
        <tissue evidence="3">Larval CNS</tissue>
    </source>
</reference>
<reference key="2">
    <citation type="journal article" date="2007" name="Nature">
        <title>Evolution of genes and genomes on the Drosophila phylogeny.</title>
        <authorList>
            <consortium name="Drosophila 12 genomes consortium"/>
        </authorList>
    </citation>
    <scope>NUCLEOTIDE SEQUENCE [LARGE SCALE GENOMIC DNA]</scope>
    <source>
        <strain>Tucson 15010-1051.87</strain>
    </source>
</reference>
<evidence type="ECO:0000250" key="1">
    <source>
        <dbReference type="UniProtKB" id="Q26377"/>
    </source>
</evidence>
<evidence type="ECO:0000255" key="2"/>
<evidence type="ECO:0000269" key="3">
    <source>
    </source>
</evidence>
<evidence type="ECO:0000305" key="4"/>
<evidence type="ECO:0000312" key="5">
    <source>
        <dbReference type="EMBL" id="CAH65473.1"/>
    </source>
</evidence>
<comment type="function">
    <text evidence="1">Cardioactive peptide. Corazonin is probably involved in the physiological regulation of the heart beat. Clock (Clk) and cycle (cyc) proteins negatively regulate Crz transcription in a cell-specific manner (By similarity).</text>
</comment>
<comment type="subcellular location">
    <molecule>Corazonin</molecule>
    <subcellularLocation>
        <location evidence="1">Secreted</location>
    </subcellularLocation>
</comment>
<comment type="subcellular location">
    <molecule>Corazonin precursor-related peptide</molecule>
    <subcellularLocation>
        <location evidence="1">Secreted</location>
    </subcellularLocation>
</comment>
<comment type="tissue specificity">
    <text evidence="3">Expression is restricted to 24 neurons in the larval CNS (8 in the brain and 16 in the ventral nerve cord) and 12-16 neurons in the pars lateralis of the adult brain.</text>
</comment>
<comment type="similarity">
    <text evidence="4">Belongs to the corazonin family.</text>
</comment>
<feature type="signal peptide" evidence="1">
    <location>
        <begin position="1"/>
        <end position="20"/>
    </location>
</feature>
<feature type="chain" id="PRO_0000341613" description="Pro-corazonin" evidence="2">
    <location>
        <begin position="21"/>
        <end position="153"/>
    </location>
</feature>
<feature type="peptide" id="PRO_0000341506" description="Corazonin">
    <location>
        <begin position="21"/>
        <end position="31"/>
    </location>
</feature>
<feature type="peptide" id="PRO_0000341507" description="Corazonin precursor-related peptide">
    <location>
        <begin position="35"/>
        <end position="62"/>
    </location>
</feature>
<feature type="propeptide" id="PRO_0000341508" evidence="1">
    <location>
        <begin position="64"/>
        <end position="153"/>
    </location>
</feature>
<feature type="modified residue" description="Pyrrolidone carboxylic acid" evidence="1">
    <location>
        <position position="21"/>
    </location>
</feature>
<feature type="modified residue" description="Asparagine amide" evidence="1">
    <location>
        <position position="31"/>
    </location>
</feature>
<name>CORZ_DROVI</name>
<gene>
    <name type="primary">Crz</name>
    <name type="ORF">GJ14415</name>
</gene>
<organism>
    <name type="scientific">Drosophila virilis</name>
    <name type="common">Fruit fly</name>
    <dbReference type="NCBI Taxonomy" id="7244"/>
    <lineage>
        <taxon>Eukaryota</taxon>
        <taxon>Metazoa</taxon>
        <taxon>Ecdysozoa</taxon>
        <taxon>Arthropoda</taxon>
        <taxon>Hexapoda</taxon>
        <taxon>Insecta</taxon>
        <taxon>Pterygota</taxon>
        <taxon>Neoptera</taxon>
        <taxon>Endopterygota</taxon>
        <taxon>Diptera</taxon>
        <taxon>Brachycera</taxon>
        <taxon>Muscomorpha</taxon>
        <taxon>Ephydroidea</taxon>
        <taxon>Drosophilidae</taxon>
        <taxon>Drosophila</taxon>
    </lineage>
</organism>
<proteinExistence type="evidence at transcript level"/>